<comment type="function">
    <text evidence="2 3 4">Regulatory subunit of the voltage-gated potassium (Kv) channel which, when coassembled with KCNB1, modulates the kinetics parameters of the heterotetrameric channel namely the inactivation and deactivation rate (PubMed:11852086, PubMed:12060745, PubMed:19074135). Potassium channel subunit that does not form functional channels by itself (PubMed:11852086, PubMed:12060745). Reduces the deactivation rate (PubMed:11852086). Moderately accelerates activation (PubMed:12060745).</text>
</comment>
<comment type="subunit">
    <text evidence="2 3 4">Heterotetramer with KCNB1 (PubMed:11852086, PubMed:12060745, PubMed:19074135). Does not form homomultimers (PubMed:12060745).</text>
</comment>
<comment type="subcellular location">
    <subcellularLocation>
        <location evidence="3 4">Cell membrane</location>
        <topology evidence="6">Multi-pass membrane protein</topology>
    </subcellularLocation>
    <subcellularLocation>
        <location evidence="3">Cytoplasm</location>
    </subcellularLocation>
    <text evidence="3 4">Has to be associated with KCNB1 or possibly another partner to get inserted in the plasma membrane (PubMed:12060745). Colocalizes with KCNB1 at the plasma membrane (PubMed:12060745, PubMed:19074135). Retains in the endoplasmic reticulum in the absence of KCNB1 (PubMed:12060745).</text>
</comment>
<comment type="alternative products">
    <event type="alternative splicing"/>
    <isoform>
        <id>Q8TAE7-1</id>
        <name>1</name>
        <name>Kv10.1b</name>
        <sequence type="displayed"/>
    </isoform>
    <isoform>
        <id>Q8TAE7-2</id>
        <name>2</name>
        <name>Kv10.1a</name>
        <sequence type="described" ref="VSP_001026"/>
    </isoform>
</comment>
<comment type="tissue specificity">
    <text evidence="2 3">Expressed in the brain, liver, testis, small intestine, colon, thymus and adrenal gland (PubMed:11852086, PubMed:12060745).</text>
</comment>
<comment type="domain">
    <text evidence="1">The transmembrane segment S4 functions as a voltage-sensor and is characterized by a series of positively charged amino acids at every third position. Channel opening and closing is effected by a conformation change that affects the position and orientation of the voltage-sensor paddle formed by S3 and S4 within the membrane. A transmembrane electric field that is positive inside would push the positively charged S4 segment outwards, thereby opening the pore, while a field that is negative inside would pull the S4 segment inwards and close the pore. Changes in the position and orientation of S4 are then transmitted to the activation gate formed by the inner helix bundle via the S4-S5 linker region.</text>
</comment>
<comment type="similarity">
    <text evidence="6">Belongs to the potassium channel family. G (TC 1.A.1.2) subfamily. Kv6.3/KCNG3 sub-subfamily.</text>
</comment>
<proteinExistence type="evidence at protein level"/>
<organism>
    <name type="scientific">Homo sapiens</name>
    <name type="common">Human</name>
    <dbReference type="NCBI Taxonomy" id="9606"/>
    <lineage>
        <taxon>Eukaryota</taxon>
        <taxon>Metazoa</taxon>
        <taxon>Chordata</taxon>
        <taxon>Craniata</taxon>
        <taxon>Vertebrata</taxon>
        <taxon>Euteleostomi</taxon>
        <taxon>Mammalia</taxon>
        <taxon>Eutheria</taxon>
        <taxon>Euarchontoglires</taxon>
        <taxon>Primates</taxon>
        <taxon>Haplorrhini</taxon>
        <taxon>Catarrhini</taxon>
        <taxon>Hominidae</taxon>
        <taxon>Homo</taxon>
    </lineage>
</organism>
<feature type="chain" id="PRO_0000054077" description="Voltage-gated potassium channel regulatory subunit KCNG3">
    <location>
        <begin position="1"/>
        <end position="436"/>
    </location>
</feature>
<feature type="topological domain" description="Cytoplasmic" evidence="1">
    <location>
        <begin position="1"/>
        <end position="168"/>
    </location>
</feature>
<feature type="transmembrane region" description="Helical; Name=Segment S1" evidence="1">
    <location>
        <begin position="169"/>
        <end position="190"/>
    </location>
</feature>
<feature type="topological domain" description="Extracellular" evidence="1">
    <location>
        <begin position="191"/>
        <end position="220"/>
    </location>
</feature>
<feature type="transmembrane region" description="Helical; Name=Segment S2" evidence="1">
    <location>
        <begin position="221"/>
        <end position="242"/>
    </location>
</feature>
<feature type="topological domain" description="Cytoplasmic" evidence="1">
    <location>
        <begin position="243"/>
        <end position="253"/>
    </location>
</feature>
<feature type="transmembrane region" description="Helical; Name=Segment S3" evidence="1">
    <location>
        <begin position="254"/>
        <end position="274"/>
    </location>
</feature>
<feature type="topological domain" description="Extracellular" evidence="1">
    <location>
        <begin position="275"/>
        <end position="284"/>
    </location>
</feature>
<feature type="transmembrane region" description="Helical; Voltage-sensor; Name=Segment S4" evidence="1">
    <location>
        <begin position="285"/>
        <end position="305"/>
    </location>
</feature>
<feature type="topological domain" description="Cytoplasmic" evidence="1">
    <location>
        <begin position="306"/>
        <end position="320"/>
    </location>
</feature>
<feature type="transmembrane region" description="Helical; Name=Segment S5" evidence="1">
    <location>
        <begin position="321"/>
        <end position="342"/>
    </location>
</feature>
<feature type="topological domain" description="Extracellular" evidence="1">
    <location>
        <begin position="343"/>
        <end position="360"/>
    </location>
</feature>
<feature type="intramembrane region" description="Helical; Name=Pore helix" evidence="1">
    <location>
        <begin position="361"/>
        <end position="372"/>
    </location>
</feature>
<feature type="intramembrane region" evidence="1">
    <location>
        <begin position="373"/>
        <end position="380"/>
    </location>
</feature>
<feature type="topological domain" description="Extracellular" evidence="1">
    <location>
        <begin position="381"/>
        <end position="387"/>
    </location>
</feature>
<feature type="transmembrane region" description="Helical; Name=Segment S6" evidence="1">
    <location>
        <begin position="388"/>
        <end position="416"/>
    </location>
</feature>
<feature type="topological domain" description="Cytoplasmic" evidence="1">
    <location>
        <begin position="417"/>
        <end position="436"/>
    </location>
</feature>
<feature type="short sequence motif" description="Selectivity filter" evidence="1">
    <location>
        <begin position="373"/>
        <end position="378"/>
    </location>
</feature>
<feature type="splice variant" id="VSP_001026" description="In isoform 2." evidence="5">
    <location>
        <begin position="212"/>
        <end position="222"/>
    </location>
</feature>
<accession>Q8TAE7</accession>
<accession>Q53SC1</accession>
<gene>
    <name evidence="10" type="primary">KCNG3</name>
</gene>
<protein>
    <recommendedName>
        <fullName evidence="6">Voltage-gated potassium channel regulatory subunit KCNG3</fullName>
    </recommendedName>
    <alternativeName>
        <fullName>Potassium voltage-gated channel subfamily G member 3</fullName>
    </alternativeName>
    <alternativeName>
        <fullName evidence="8 9">Voltage-gated potassium channel subunit Kv10.1</fullName>
    </alternativeName>
    <alternativeName>
        <fullName evidence="7">Voltage-gated potassium channel subunit Kv6.3</fullName>
    </alternativeName>
</protein>
<name>KCNG3_HUMAN</name>
<reference key="1">
    <citation type="journal article" date="2002" name="FEBS Lett.">
        <title>Molecular cloning and characterization of Kv6.3, a novel modulatory subunit for voltage-gated K(+) channel Kv2.1.</title>
        <authorList>
            <person name="Sano Y."/>
            <person name="Mochizuki S."/>
            <person name="Miyake A."/>
            <person name="Kitada C."/>
            <person name="Inamura K."/>
            <person name="Yokoi H."/>
            <person name="Nozawa K."/>
            <person name="Matsushime H."/>
            <person name="Furuichi K."/>
        </authorList>
    </citation>
    <scope>NUCLEOTIDE SEQUENCE [MRNA] (ISOFORM 1)</scope>
    <scope>FUNCTION</scope>
    <scope>SUBUNIT</scope>
    <scope>INTERACTION WITH KCNB1</scope>
    <scope>TISSUE SPECIFICITY</scope>
    <source>
        <tissue>Brain</tissue>
    </source>
</reference>
<reference key="2">
    <citation type="journal article" date="2002" name="Proc. Natl. Acad. Sci. U.S.A.">
        <title>Obligatory heterotetramerization of three previously uncharacterized Kv channel alpha-subunits identified in the human genome.</title>
        <authorList>
            <person name="Ottschytsch N."/>
            <person name="Raes A."/>
            <person name="Van Hoorick D."/>
            <person name="Snyders D.J."/>
        </authorList>
    </citation>
    <scope>NUCLEOTIDE SEQUENCE [MRNA] (ISOFORM 1)</scope>
    <scope>FUNCTION</scope>
    <scope>SUBUNIT</scope>
    <scope>INTERACTION WITH KCNB1</scope>
    <scope>SUBCELLULAR LOCATION</scope>
    <scope>TISSUE SPECIFICITY</scope>
</reference>
<reference key="3">
    <citation type="submission" date="2001-12" db="EMBL/GenBank/DDBJ databases">
        <title>Kv10.1a and Kv10.1b: two novel alternatively spliced potassium channel subunits.</title>
        <authorList>
            <person name="Vega-Saenz de Miera E.C."/>
            <person name="Rudy B."/>
        </authorList>
    </citation>
    <scope>NUCLEOTIDE SEQUENCE [MRNA] (ISOFORMS 1 AND 2)</scope>
</reference>
<reference key="4">
    <citation type="journal article" date="2005" name="Nature">
        <title>Generation and annotation of the DNA sequences of human chromosomes 2 and 4.</title>
        <authorList>
            <person name="Hillier L.W."/>
            <person name="Graves T.A."/>
            <person name="Fulton R.S."/>
            <person name="Fulton L.A."/>
            <person name="Pepin K.H."/>
            <person name="Minx P."/>
            <person name="Wagner-McPherson C."/>
            <person name="Layman D."/>
            <person name="Wylie K."/>
            <person name="Sekhon M."/>
            <person name="Becker M.C."/>
            <person name="Fewell G.A."/>
            <person name="Delehaunty K.D."/>
            <person name="Miner T.L."/>
            <person name="Nash W.E."/>
            <person name="Kremitzki C."/>
            <person name="Oddy L."/>
            <person name="Du H."/>
            <person name="Sun H."/>
            <person name="Bradshaw-Cordum H."/>
            <person name="Ali J."/>
            <person name="Carter J."/>
            <person name="Cordes M."/>
            <person name="Harris A."/>
            <person name="Isak A."/>
            <person name="van Brunt A."/>
            <person name="Nguyen C."/>
            <person name="Du F."/>
            <person name="Courtney L."/>
            <person name="Kalicki J."/>
            <person name="Ozersky P."/>
            <person name="Abbott S."/>
            <person name="Armstrong J."/>
            <person name="Belter E.A."/>
            <person name="Caruso L."/>
            <person name="Cedroni M."/>
            <person name="Cotton M."/>
            <person name="Davidson T."/>
            <person name="Desai A."/>
            <person name="Elliott G."/>
            <person name="Erb T."/>
            <person name="Fronick C."/>
            <person name="Gaige T."/>
            <person name="Haakenson W."/>
            <person name="Haglund K."/>
            <person name="Holmes A."/>
            <person name="Harkins R."/>
            <person name="Kim K."/>
            <person name="Kruchowski S.S."/>
            <person name="Strong C.M."/>
            <person name="Grewal N."/>
            <person name="Goyea E."/>
            <person name="Hou S."/>
            <person name="Levy A."/>
            <person name="Martinka S."/>
            <person name="Mead K."/>
            <person name="McLellan M.D."/>
            <person name="Meyer R."/>
            <person name="Randall-Maher J."/>
            <person name="Tomlinson C."/>
            <person name="Dauphin-Kohlberg S."/>
            <person name="Kozlowicz-Reilly A."/>
            <person name="Shah N."/>
            <person name="Swearengen-Shahid S."/>
            <person name="Snider J."/>
            <person name="Strong J.T."/>
            <person name="Thompson J."/>
            <person name="Yoakum M."/>
            <person name="Leonard S."/>
            <person name="Pearman C."/>
            <person name="Trani L."/>
            <person name="Radionenko M."/>
            <person name="Waligorski J.E."/>
            <person name="Wang C."/>
            <person name="Rock S.M."/>
            <person name="Tin-Wollam A.-M."/>
            <person name="Maupin R."/>
            <person name="Latreille P."/>
            <person name="Wendl M.C."/>
            <person name="Yang S.-P."/>
            <person name="Pohl C."/>
            <person name="Wallis J.W."/>
            <person name="Spieth J."/>
            <person name="Bieri T.A."/>
            <person name="Berkowicz N."/>
            <person name="Nelson J.O."/>
            <person name="Osborne J."/>
            <person name="Ding L."/>
            <person name="Meyer R."/>
            <person name="Sabo A."/>
            <person name="Shotland Y."/>
            <person name="Sinha P."/>
            <person name="Wohldmann P.E."/>
            <person name="Cook L.L."/>
            <person name="Hickenbotham M.T."/>
            <person name="Eldred J."/>
            <person name="Williams D."/>
            <person name="Jones T.A."/>
            <person name="She X."/>
            <person name="Ciccarelli F.D."/>
            <person name="Izaurralde E."/>
            <person name="Taylor J."/>
            <person name="Schmutz J."/>
            <person name="Myers R.M."/>
            <person name="Cox D.R."/>
            <person name="Huang X."/>
            <person name="McPherson J.D."/>
            <person name="Mardis E.R."/>
            <person name="Clifton S.W."/>
            <person name="Warren W.C."/>
            <person name="Chinwalla A.T."/>
            <person name="Eddy S.R."/>
            <person name="Marra M.A."/>
            <person name="Ovcharenko I."/>
            <person name="Furey T.S."/>
            <person name="Miller W."/>
            <person name="Eichler E.E."/>
            <person name="Bork P."/>
            <person name="Suyama M."/>
            <person name="Torrents D."/>
            <person name="Waterston R.H."/>
            <person name="Wilson R.K."/>
        </authorList>
    </citation>
    <scope>NUCLEOTIDE SEQUENCE [LARGE SCALE GENOMIC DNA]</scope>
</reference>
<reference key="5">
    <citation type="submission" date="2005-07" db="EMBL/GenBank/DDBJ databases">
        <authorList>
            <person name="Mural R.J."/>
            <person name="Istrail S."/>
            <person name="Sutton G.G."/>
            <person name="Florea L."/>
            <person name="Halpern A.L."/>
            <person name="Mobarry C.M."/>
            <person name="Lippert R."/>
            <person name="Walenz B."/>
            <person name="Shatkay H."/>
            <person name="Dew I."/>
            <person name="Miller J.R."/>
            <person name="Flanigan M.J."/>
            <person name="Edwards N.J."/>
            <person name="Bolanos R."/>
            <person name="Fasulo D."/>
            <person name="Halldorsson B.V."/>
            <person name="Hannenhalli S."/>
            <person name="Turner R."/>
            <person name="Yooseph S."/>
            <person name="Lu F."/>
            <person name="Nusskern D.R."/>
            <person name="Shue B.C."/>
            <person name="Zheng X.H."/>
            <person name="Zhong F."/>
            <person name="Delcher A.L."/>
            <person name="Huson D.H."/>
            <person name="Kravitz S.A."/>
            <person name="Mouchard L."/>
            <person name="Reinert K."/>
            <person name="Remington K.A."/>
            <person name="Clark A.G."/>
            <person name="Waterman M.S."/>
            <person name="Eichler E.E."/>
            <person name="Adams M.D."/>
            <person name="Hunkapiller M.W."/>
            <person name="Myers E.W."/>
            <person name="Venter J.C."/>
        </authorList>
    </citation>
    <scope>NUCLEOTIDE SEQUENCE [LARGE SCALE GENOMIC DNA]</scope>
</reference>
<reference key="6">
    <citation type="journal article" date="2004" name="Genome Res.">
        <title>The status, quality, and expansion of the NIH full-length cDNA project: the Mammalian Gene Collection (MGC).</title>
        <authorList>
            <consortium name="The MGC Project Team"/>
        </authorList>
    </citation>
    <scope>NUCLEOTIDE SEQUENCE [LARGE SCALE MRNA] (ISOFORM 1)</scope>
    <source>
        <tissue>Brain</tissue>
    </source>
</reference>
<reference key="7">
    <citation type="journal article" date="2009" name="J. Biol. Chem.">
        <title>Mutation of histidine 105 in the T1 domain of the potassium channel Kv2.1 disrupts heteromerization with Kv6.3 and Kv6.4.</title>
        <authorList>
            <person name="Mederos y Schnitzler M."/>
            <person name="Rinne S."/>
            <person name="Skrobek L."/>
            <person name="Renigunta V."/>
            <person name="Schlichthorl G."/>
            <person name="Derst C."/>
            <person name="Gudermann T."/>
            <person name="Daut J."/>
            <person name="Preisig-Muller R."/>
        </authorList>
    </citation>
    <scope>FUNCTION</scope>
    <scope>SUBUNIT</scope>
    <scope>SUBCELLULAR LOCATION</scope>
</reference>
<keyword id="KW-0025">Alternative splicing</keyword>
<keyword id="KW-1003">Cell membrane</keyword>
<keyword id="KW-0963">Cytoplasm</keyword>
<keyword id="KW-0407">Ion channel</keyword>
<keyword id="KW-0406">Ion transport</keyword>
<keyword id="KW-0472">Membrane</keyword>
<keyword id="KW-0630">Potassium</keyword>
<keyword id="KW-0631">Potassium channel</keyword>
<keyword id="KW-0633">Potassium transport</keyword>
<keyword id="KW-1267">Proteomics identification</keyword>
<keyword id="KW-1185">Reference proteome</keyword>
<keyword id="KW-0812">Transmembrane</keyword>
<keyword id="KW-1133">Transmembrane helix</keyword>
<keyword id="KW-0813">Transport</keyword>
<keyword id="KW-0851">Voltage-gated channel</keyword>
<dbReference type="EMBL" id="AB070604">
    <property type="protein sequence ID" value="BAB85520.1"/>
    <property type="molecule type" value="mRNA"/>
</dbReference>
<dbReference type="EMBL" id="AF348982">
    <property type="protein sequence ID" value="AAL83909.1"/>
    <property type="molecule type" value="mRNA"/>
</dbReference>
<dbReference type="EMBL" id="AF454547">
    <property type="protein sequence ID" value="AAM93548.1"/>
    <property type="molecule type" value="mRNA"/>
</dbReference>
<dbReference type="EMBL" id="AF454548">
    <property type="protein sequence ID" value="AAM93549.1"/>
    <property type="molecule type" value="mRNA"/>
</dbReference>
<dbReference type="EMBL" id="AC025750">
    <property type="protein sequence ID" value="AAY24039.1"/>
    <property type="molecule type" value="Genomic_DNA"/>
</dbReference>
<dbReference type="EMBL" id="CH471053">
    <property type="protein sequence ID" value="EAX00319.1"/>
    <property type="molecule type" value="Genomic_DNA"/>
</dbReference>
<dbReference type="EMBL" id="BC071558">
    <property type="protein sequence ID" value="AAH71558.1"/>
    <property type="molecule type" value="mRNA"/>
</dbReference>
<dbReference type="CCDS" id="CCDS1809.1">
    <molecule id="Q8TAE7-1"/>
</dbReference>
<dbReference type="CCDS" id="CCDS42674.1">
    <molecule id="Q8TAE7-2"/>
</dbReference>
<dbReference type="RefSeq" id="NP_579875.1">
    <molecule id="Q8TAE7-1"/>
    <property type="nucleotide sequence ID" value="NM_133329.6"/>
</dbReference>
<dbReference type="RefSeq" id="NP_758847.1">
    <molecule id="Q8TAE7-2"/>
    <property type="nucleotide sequence ID" value="NM_172344.3"/>
</dbReference>
<dbReference type="SMR" id="Q8TAE7"/>
<dbReference type="BioGRID" id="128090">
    <property type="interactions" value="8"/>
</dbReference>
<dbReference type="CORUM" id="Q8TAE7"/>
<dbReference type="FunCoup" id="Q8TAE7">
    <property type="interactions" value="101"/>
</dbReference>
<dbReference type="IntAct" id="Q8TAE7">
    <property type="interactions" value="2"/>
</dbReference>
<dbReference type="STRING" id="9606.ENSP00000304127"/>
<dbReference type="ChEMBL" id="CHEMBL2362996"/>
<dbReference type="DrugBank" id="DB00228">
    <property type="generic name" value="Enflurane"/>
</dbReference>
<dbReference type="DrugBank" id="DB01110">
    <property type="generic name" value="Miconazole"/>
</dbReference>
<dbReference type="DrugBank" id="DB01069">
    <property type="generic name" value="Promethazine"/>
</dbReference>
<dbReference type="DrugCentral" id="Q8TAE7"/>
<dbReference type="GlyGen" id="Q8TAE7">
    <property type="glycosylation" value="2 sites, 1 O-linked glycan (1 site)"/>
</dbReference>
<dbReference type="iPTMnet" id="Q8TAE7"/>
<dbReference type="PhosphoSitePlus" id="Q8TAE7"/>
<dbReference type="BioMuta" id="KCNG3"/>
<dbReference type="DMDM" id="24418472"/>
<dbReference type="MassIVE" id="Q8TAE7"/>
<dbReference type="PaxDb" id="9606-ENSP00000304127"/>
<dbReference type="PeptideAtlas" id="Q8TAE7"/>
<dbReference type="Antibodypedia" id="29754">
    <property type="antibodies" value="152 antibodies from 23 providers"/>
</dbReference>
<dbReference type="DNASU" id="170850"/>
<dbReference type="Ensembl" id="ENST00000306078.2">
    <molecule id="Q8TAE7-1"/>
    <property type="protein sequence ID" value="ENSP00000304127.1"/>
    <property type="gene ID" value="ENSG00000171126.8"/>
</dbReference>
<dbReference type="Ensembl" id="ENST00000394973.4">
    <molecule id="Q8TAE7-2"/>
    <property type="protein sequence ID" value="ENSP00000378424.4"/>
    <property type="gene ID" value="ENSG00000171126.8"/>
</dbReference>
<dbReference type="GeneID" id="170850"/>
<dbReference type="KEGG" id="hsa:170850"/>
<dbReference type="MANE-Select" id="ENST00000306078.2">
    <property type="protein sequence ID" value="ENSP00000304127.1"/>
    <property type="RefSeq nucleotide sequence ID" value="NM_133329.6"/>
    <property type="RefSeq protein sequence ID" value="NP_579875.1"/>
</dbReference>
<dbReference type="UCSC" id="uc002rsm.4">
    <molecule id="Q8TAE7-1"/>
    <property type="organism name" value="human"/>
</dbReference>
<dbReference type="AGR" id="HGNC:18306"/>
<dbReference type="CTD" id="170850"/>
<dbReference type="DisGeNET" id="170850"/>
<dbReference type="GeneCards" id="KCNG3"/>
<dbReference type="HGNC" id="HGNC:18306">
    <property type="gene designation" value="KCNG3"/>
</dbReference>
<dbReference type="HPA" id="ENSG00000171126">
    <property type="expression patterns" value="Tissue enhanced (brain)"/>
</dbReference>
<dbReference type="MIM" id="606767">
    <property type="type" value="gene"/>
</dbReference>
<dbReference type="neXtProt" id="NX_Q8TAE7"/>
<dbReference type="OpenTargets" id="ENSG00000171126"/>
<dbReference type="PharmGKB" id="PA30036"/>
<dbReference type="VEuPathDB" id="HostDB:ENSG00000171126"/>
<dbReference type="eggNOG" id="KOG3713">
    <property type="taxonomic scope" value="Eukaryota"/>
</dbReference>
<dbReference type="GeneTree" id="ENSGT00940000159658"/>
<dbReference type="HOGENOM" id="CLU_011722_4_1_1"/>
<dbReference type="InParanoid" id="Q8TAE7"/>
<dbReference type="OMA" id="FYNEMVY"/>
<dbReference type="OrthoDB" id="296522at2759"/>
<dbReference type="PAN-GO" id="Q8TAE7">
    <property type="GO annotations" value="4 GO annotations based on evolutionary models"/>
</dbReference>
<dbReference type="PhylomeDB" id="Q8TAE7"/>
<dbReference type="TreeFam" id="TF313103"/>
<dbReference type="PathwayCommons" id="Q8TAE7"/>
<dbReference type="Reactome" id="R-HSA-1296072">
    <property type="pathway name" value="Voltage gated Potassium channels"/>
</dbReference>
<dbReference type="SignaLink" id="Q8TAE7"/>
<dbReference type="BioGRID-ORCS" id="170850">
    <property type="hits" value="19 hits in 1158 CRISPR screens"/>
</dbReference>
<dbReference type="ChiTaRS" id="KCNG3">
    <property type="organism name" value="human"/>
</dbReference>
<dbReference type="GeneWiki" id="KCNG3"/>
<dbReference type="GenomeRNAi" id="170850"/>
<dbReference type="Pharos" id="Q8TAE7">
    <property type="development level" value="Tclin"/>
</dbReference>
<dbReference type="PRO" id="PR:Q8TAE7"/>
<dbReference type="Proteomes" id="UP000005640">
    <property type="component" value="Chromosome 2"/>
</dbReference>
<dbReference type="RNAct" id="Q8TAE7">
    <property type="molecule type" value="protein"/>
</dbReference>
<dbReference type="Bgee" id="ENSG00000171126">
    <property type="expression patterns" value="Expressed in islet of Langerhans and 57 other cell types or tissues"/>
</dbReference>
<dbReference type="GO" id="GO:0005783">
    <property type="term" value="C:endoplasmic reticulum"/>
    <property type="evidence" value="ECO:0000314"/>
    <property type="project" value="UniProtKB"/>
</dbReference>
<dbReference type="GO" id="GO:0016020">
    <property type="term" value="C:membrane"/>
    <property type="evidence" value="ECO:0000318"/>
    <property type="project" value="GO_Central"/>
</dbReference>
<dbReference type="GO" id="GO:0005886">
    <property type="term" value="C:plasma membrane"/>
    <property type="evidence" value="ECO:0000314"/>
    <property type="project" value="UniProtKB"/>
</dbReference>
<dbReference type="GO" id="GO:0008076">
    <property type="term" value="C:voltage-gated potassium channel complex"/>
    <property type="evidence" value="ECO:0000314"/>
    <property type="project" value="GO_Central"/>
</dbReference>
<dbReference type="GO" id="GO:0015459">
    <property type="term" value="F:potassium channel regulator activity"/>
    <property type="evidence" value="ECO:0000314"/>
    <property type="project" value="UniProtKB"/>
</dbReference>
<dbReference type="GO" id="GO:0005249">
    <property type="term" value="F:voltage-gated potassium channel activity"/>
    <property type="evidence" value="ECO:0007669"/>
    <property type="project" value="InterPro"/>
</dbReference>
<dbReference type="GO" id="GO:0001508">
    <property type="term" value="P:action potential"/>
    <property type="evidence" value="ECO:0000318"/>
    <property type="project" value="GO_Central"/>
</dbReference>
<dbReference type="GO" id="GO:0071805">
    <property type="term" value="P:potassium ion transmembrane transport"/>
    <property type="evidence" value="ECO:0000318"/>
    <property type="project" value="GO_Central"/>
</dbReference>
<dbReference type="GO" id="GO:0051260">
    <property type="term" value="P:protein homooligomerization"/>
    <property type="evidence" value="ECO:0007669"/>
    <property type="project" value="InterPro"/>
</dbReference>
<dbReference type="GO" id="GO:1901379">
    <property type="term" value="P:regulation of potassium ion transmembrane transport"/>
    <property type="evidence" value="ECO:0000314"/>
    <property type="project" value="UniProtKB"/>
</dbReference>
<dbReference type="GO" id="GO:0043266">
    <property type="term" value="P:regulation of potassium ion transport"/>
    <property type="evidence" value="ECO:0000314"/>
    <property type="project" value="UniProtKB"/>
</dbReference>
<dbReference type="CDD" id="cd18422">
    <property type="entry name" value="BTB_POZ_KCNG3"/>
    <property type="match status" value="1"/>
</dbReference>
<dbReference type="FunFam" id="1.20.120.350:FF:000048">
    <property type="entry name" value="Potassium voltage-gated channel modifier subfamily G member 3"/>
    <property type="match status" value="1"/>
</dbReference>
<dbReference type="FunFam" id="3.30.710.10:FF:000060">
    <property type="entry name" value="Potassium voltage-gated channel modifier subfamily G member 3"/>
    <property type="match status" value="1"/>
</dbReference>
<dbReference type="FunFam" id="1.10.287.70:FF:000005">
    <property type="entry name" value="potassium voltage-gated channel subfamily G member 1"/>
    <property type="match status" value="1"/>
</dbReference>
<dbReference type="Gene3D" id="1.10.287.70">
    <property type="match status" value="1"/>
</dbReference>
<dbReference type="Gene3D" id="3.30.710.10">
    <property type="entry name" value="Potassium Channel Kv1.1, Chain A"/>
    <property type="match status" value="1"/>
</dbReference>
<dbReference type="Gene3D" id="1.20.120.350">
    <property type="entry name" value="Voltage-gated potassium channels. Chain C"/>
    <property type="match status" value="1"/>
</dbReference>
<dbReference type="InterPro" id="IPR000210">
    <property type="entry name" value="BTB/POZ_dom"/>
</dbReference>
<dbReference type="InterPro" id="IPR005821">
    <property type="entry name" value="Ion_trans_dom"/>
</dbReference>
<dbReference type="InterPro" id="IPR003968">
    <property type="entry name" value="K_chnl_volt-dep_Kv"/>
</dbReference>
<dbReference type="InterPro" id="IPR003971">
    <property type="entry name" value="K_chnl_volt-dep_Kv5/Kv9"/>
</dbReference>
<dbReference type="InterPro" id="IPR011333">
    <property type="entry name" value="SKP1/BTB/POZ_sf"/>
</dbReference>
<dbReference type="InterPro" id="IPR003131">
    <property type="entry name" value="T1-type_BTB"/>
</dbReference>
<dbReference type="InterPro" id="IPR028325">
    <property type="entry name" value="VG_K_chnl"/>
</dbReference>
<dbReference type="InterPro" id="IPR027359">
    <property type="entry name" value="Volt_channel_dom_sf"/>
</dbReference>
<dbReference type="PANTHER" id="PTHR11537:SF91">
    <property type="entry name" value="POTASSIUM VOLTAGE-GATED CHANNEL SUBFAMILY G MEMBER 3"/>
    <property type="match status" value="1"/>
</dbReference>
<dbReference type="PANTHER" id="PTHR11537">
    <property type="entry name" value="VOLTAGE-GATED POTASSIUM CHANNEL"/>
    <property type="match status" value="1"/>
</dbReference>
<dbReference type="Pfam" id="PF02214">
    <property type="entry name" value="BTB_2"/>
    <property type="match status" value="1"/>
</dbReference>
<dbReference type="Pfam" id="PF00520">
    <property type="entry name" value="Ion_trans"/>
    <property type="match status" value="1"/>
</dbReference>
<dbReference type="PRINTS" id="PR00169">
    <property type="entry name" value="KCHANNEL"/>
</dbReference>
<dbReference type="PRINTS" id="PR01494">
    <property type="entry name" value="KV9CHANNEL"/>
</dbReference>
<dbReference type="PRINTS" id="PR01491">
    <property type="entry name" value="KVCHANNEL"/>
</dbReference>
<dbReference type="SMART" id="SM00225">
    <property type="entry name" value="BTB"/>
    <property type="match status" value="1"/>
</dbReference>
<dbReference type="SUPFAM" id="SSF54695">
    <property type="entry name" value="POZ domain"/>
    <property type="match status" value="1"/>
</dbReference>
<dbReference type="SUPFAM" id="SSF81324">
    <property type="entry name" value="Voltage-gated potassium channels"/>
    <property type="match status" value="1"/>
</dbReference>
<sequence length="436" mass="49593">MTFGRSGAASVVLNVGGARYSLSRELLKDFPLRRVSRLHGCRSERDVLEVCDDYDRERNEYFFDRHSEAFGFILLYVRGHGKLRFAPRMCELSFYNEMIYWGLEGAHLEYCCQRRLDDRMSDTYTFYSADEPGVLGRDEARPGGAEAAPSRRWLERMRRTFEEPTSSLAAQILASVSVVFVIVSMVVLCASTLPDWRNAAADNRSLDDRSRYSAGPGREPSGIIEAICIGWFTAECIVRFIVSKNKCEFVKRPLNIIDLLAITPYYISVLMTVFTGENSQLQRAGVTLRVLRMMRIFWVIKLARHFIGLQTLGLTLKRCYREMVMLLVFICVAMAIFSALSQLLEHGLDLETSNKDFTSIPAACWWVIISMTTVGYGDMYPITVPGRILGGVCVVSGIVLLALPITFIYHSFVQCYHELKFRSARYSRSLSTEFLN</sequence>
<evidence type="ECO:0000250" key="1">
    <source>
        <dbReference type="UniProtKB" id="P63142"/>
    </source>
</evidence>
<evidence type="ECO:0000269" key="2">
    <source>
    </source>
</evidence>
<evidence type="ECO:0000269" key="3">
    <source>
    </source>
</evidence>
<evidence type="ECO:0000269" key="4">
    <source>
    </source>
</evidence>
<evidence type="ECO:0000303" key="5">
    <source ref="3"/>
</evidence>
<evidence type="ECO:0000305" key="6"/>
<evidence type="ECO:0000305" key="7">
    <source>
    </source>
</evidence>
<evidence type="ECO:0000305" key="8">
    <source>
    </source>
</evidence>
<evidence type="ECO:0000305" key="9">
    <source ref="3"/>
</evidence>
<evidence type="ECO:0000312" key="10">
    <source>
        <dbReference type="HGNC" id="HGNC:18306"/>
    </source>
</evidence>